<proteinExistence type="inferred from homology"/>
<accession>Q97EF4</accession>
<sequence length="205" mass="23490">MVKIKVCGIRREEDIEIVNKYKPNYVGFVFAKSKRQVDMYKAEKLADKLDVSIKKVGVFVNEDIEKVKEVSFRVKLDIVQLHGDENEEYIDKLKGFKVWKAVNVTAGKDVEKFKNYRIDAFLVDGYDGTNRGGTGKSFNWNLLKENQDKILKPIIAAGGLNIDNVEKCIEVLNPFAVDVSSGVETDGFKDEEKIKKFIMRVRKFK</sequence>
<protein>
    <recommendedName>
        <fullName evidence="1">N-(5'-phosphoribosyl)anthranilate isomerase</fullName>
        <shortName evidence="1">PRAI</shortName>
        <ecNumber evidence="1">5.3.1.24</ecNumber>
    </recommendedName>
</protein>
<evidence type="ECO:0000255" key="1">
    <source>
        <dbReference type="HAMAP-Rule" id="MF_00135"/>
    </source>
</evidence>
<gene>
    <name evidence="1" type="primary">trpF</name>
    <name type="ordered locus">CA_C3159</name>
</gene>
<organism>
    <name type="scientific">Clostridium acetobutylicum (strain ATCC 824 / DSM 792 / JCM 1419 / IAM 19013 / LMG 5710 / NBRC 13948 / NRRL B-527 / VKM B-1787 / 2291 / W)</name>
    <dbReference type="NCBI Taxonomy" id="272562"/>
    <lineage>
        <taxon>Bacteria</taxon>
        <taxon>Bacillati</taxon>
        <taxon>Bacillota</taxon>
        <taxon>Clostridia</taxon>
        <taxon>Eubacteriales</taxon>
        <taxon>Clostridiaceae</taxon>
        <taxon>Clostridium</taxon>
    </lineage>
</organism>
<feature type="chain" id="PRO_0000154356" description="N-(5'-phosphoribosyl)anthranilate isomerase">
    <location>
        <begin position="1"/>
        <end position="205"/>
    </location>
</feature>
<comment type="catalytic activity">
    <reaction evidence="1">
        <text>N-(5-phospho-beta-D-ribosyl)anthranilate = 1-(2-carboxyphenylamino)-1-deoxy-D-ribulose 5-phosphate</text>
        <dbReference type="Rhea" id="RHEA:21540"/>
        <dbReference type="ChEBI" id="CHEBI:18277"/>
        <dbReference type="ChEBI" id="CHEBI:58613"/>
        <dbReference type="EC" id="5.3.1.24"/>
    </reaction>
</comment>
<comment type="pathway">
    <text evidence="1">Amino-acid biosynthesis; L-tryptophan biosynthesis; L-tryptophan from chorismate: step 3/5.</text>
</comment>
<comment type="similarity">
    <text evidence="1">Belongs to the TrpF family.</text>
</comment>
<name>TRPF_CLOAB</name>
<keyword id="KW-0028">Amino-acid biosynthesis</keyword>
<keyword id="KW-0057">Aromatic amino acid biosynthesis</keyword>
<keyword id="KW-0413">Isomerase</keyword>
<keyword id="KW-1185">Reference proteome</keyword>
<keyword id="KW-0822">Tryptophan biosynthesis</keyword>
<reference key="1">
    <citation type="journal article" date="2001" name="J. Bacteriol.">
        <title>Genome sequence and comparative analysis of the solvent-producing bacterium Clostridium acetobutylicum.</title>
        <authorList>
            <person name="Noelling J."/>
            <person name="Breton G."/>
            <person name="Omelchenko M.V."/>
            <person name="Makarova K.S."/>
            <person name="Zeng Q."/>
            <person name="Gibson R."/>
            <person name="Lee H.M."/>
            <person name="Dubois J."/>
            <person name="Qiu D."/>
            <person name="Hitti J."/>
            <person name="Wolf Y.I."/>
            <person name="Tatusov R.L."/>
            <person name="Sabathe F."/>
            <person name="Doucette-Stamm L.A."/>
            <person name="Soucaille P."/>
            <person name="Daly M.J."/>
            <person name="Bennett G.N."/>
            <person name="Koonin E.V."/>
            <person name="Smith D.R."/>
        </authorList>
    </citation>
    <scope>NUCLEOTIDE SEQUENCE [LARGE SCALE GENOMIC DNA]</scope>
    <source>
        <strain>ATCC 824 / DSM 792 / JCM 1419 / IAM 19013 / LMG 5710 / NBRC 13948 / NRRL B-527 / VKM B-1787 / 2291 / W</strain>
    </source>
</reference>
<dbReference type="EC" id="5.3.1.24" evidence="1"/>
<dbReference type="EMBL" id="AE001437">
    <property type="protein sequence ID" value="AAK81096.1"/>
    <property type="molecule type" value="Genomic_DNA"/>
</dbReference>
<dbReference type="PIR" id="E97288">
    <property type="entry name" value="E97288"/>
</dbReference>
<dbReference type="RefSeq" id="NP_349756.1">
    <property type="nucleotide sequence ID" value="NC_003030.1"/>
</dbReference>
<dbReference type="RefSeq" id="WP_010966436.1">
    <property type="nucleotide sequence ID" value="NC_003030.1"/>
</dbReference>
<dbReference type="SMR" id="Q97EF4"/>
<dbReference type="STRING" id="272562.CA_C3159"/>
<dbReference type="KEGG" id="cac:CA_C3159"/>
<dbReference type="PATRIC" id="fig|272562.8.peg.3340"/>
<dbReference type="eggNOG" id="COG0135">
    <property type="taxonomic scope" value="Bacteria"/>
</dbReference>
<dbReference type="HOGENOM" id="CLU_076364_1_0_9"/>
<dbReference type="OrthoDB" id="9786954at2"/>
<dbReference type="UniPathway" id="UPA00035">
    <property type="reaction ID" value="UER00042"/>
</dbReference>
<dbReference type="Proteomes" id="UP000000814">
    <property type="component" value="Chromosome"/>
</dbReference>
<dbReference type="GO" id="GO:0004640">
    <property type="term" value="F:phosphoribosylanthranilate isomerase activity"/>
    <property type="evidence" value="ECO:0007669"/>
    <property type="project" value="UniProtKB-UniRule"/>
</dbReference>
<dbReference type="GO" id="GO:0000162">
    <property type="term" value="P:L-tryptophan biosynthetic process"/>
    <property type="evidence" value="ECO:0007669"/>
    <property type="project" value="UniProtKB-UniRule"/>
</dbReference>
<dbReference type="CDD" id="cd00405">
    <property type="entry name" value="PRAI"/>
    <property type="match status" value="1"/>
</dbReference>
<dbReference type="FunFam" id="3.20.20.70:FF:000075">
    <property type="entry name" value="Tryptophan biosynthesis protein TRP1"/>
    <property type="match status" value="1"/>
</dbReference>
<dbReference type="Gene3D" id="3.20.20.70">
    <property type="entry name" value="Aldolase class I"/>
    <property type="match status" value="1"/>
</dbReference>
<dbReference type="HAMAP" id="MF_00135">
    <property type="entry name" value="PRAI"/>
    <property type="match status" value="1"/>
</dbReference>
<dbReference type="InterPro" id="IPR013785">
    <property type="entry name" value="Aldolase_TIM"/>
</dbReference>
<dbReference type="InterPro" id="IPR001240">
    <property type="entry name" value="PRAI_dom"/>
</dbReference>
<dbReference type="InterPro" id="IPR011060">
    <property type="entry name" value="RibuloseP-bd_barrel"/>
</dbReference>
<dbReference type="InterPro" id="IPR044643">
    <property type="entry name" value="TrpF_fam"/>
</dbReference>
<dbReference type="PANTHER" id="PTHR42894">
    <property type="entry name" value="N-(5'-PHOSPHORIBOSYL)ANTHRANILATE ISOMERASE"/>
    <property type="match status" value="1"/>
</dbReference>
<dbReference type="PANTHER" id="PTHR42894:SF1">
    <property type="entry name" value="N-(5'-PHOSPHORIBOSYL)ANTHRANILATE ISOMERASE"/>
    <property type="match status" value="1"/>
</dbReference>
<dbReference type="Pfam" id="PF00697">
    <property type="entry name" value="PRAI"/>
    <property type="match status" value="1"/>
</dbReference>
<dbReference type="SUPFAM" id="SSF51366">
    <property type="entry name" value="Ribulose-phoshate binding barrel"/>
    <property type="match status" value="1"/>
</dbReference>